<dbReference type="EC" id="2.7.1.24" evidence="1"/>
<dbReference type="EMBL" id="AE014133">
    <property type="protein sequence ID" value="AAN59254.1"/>
    <property type="molecule type" value="Genomic_DNA"/>
</dbReference>
<dbReference type="RefSeq" id="NP_721948.1">
    <property type="nucleotide sequence ID" value="NC_004350.2"/>
</dbReference>
<dbReference type="RefSeq" id="WP_002310474.1">
    <property type="nucleotide sequence ID" value="NC_004350.2"/>
</dbReference>
<dbReference type="SMR" id="Q8DSZ0"/>
<dbReference type="STRING" id="210007.SMU_1613c"/>
<dbReference type="KEGG" id="smu:SMU_1613c"/>
<dbReference type="PATRIC" id="fig|210007.7.peg.1436"/>
<dbReference type="eggNOG" id="COG0237">
    <property type="taxonomic scope" value="Bacteria"/>
</dbReference>
<dbReference type="HOGENOM" id="CLU_057180_2_1_9"/>
<dbReference type="OrthoDB" id="9812943at2"/>
<dbReference type="PhylomeDB" id="Q8DSZ0"/>
<dbReference type="UniPathway" id="UPA00241">
    <property type="reaction ID" value="UER00356"/>
</dbReference>
<dbReference type="Proteomes" id="UP000002512">
    <property type="component" value="Chromosome"/>
</dbReference>
<dbReference type="GO" id="GO:0005737">
    <property type="term" value="C:cytoplasm"/>
    <property type="evidence" value="ECO:0007669"/>
    <property type="project" value="UniProtKB-SubCell"/>
</dbReference>
<dbReference type="GO" id="GO:0005524">
    <property type="term" value="F:ATP binding"/>
    <property type="evidence" value="ECO:0007669"/>
    <property type="project" value="UniProtKB-UniRule"/>
</dbReference>
<dbReference type="GO" id="GO:0004140">
    <property type="term" value="F:dephospho-CoA kinase activity"/>
    <property type="evidence" value="ECO:0007669"/>
    <property type="project" value="UniProtKB-UniRule"/>
</dbReference>
<dbReference type="GO" id="GO:0015937">
    <property type="term" value="P:coenzyme A biosynthetic process"/>
    <property type="evidence" value="ECO:0007669"/>
    <property type="project" value="UniProtKB-UniRule"/>
</dbReference>
<dbReference type="CDD" id="cd02022">
    <property type="entry name" value="DPCK"/>
    <property type="match status" value="1"/>
</dbReference>
<dbReference type="FunFam" id="3.40.50.300:FF:000991">
    <property type="entry name" value="Dephospho-CoA kinase"/>
    <property type="match status" value="1"/>
</dbReference>
<dbReference type="Gene3D" id="3.40.50.300">
    <property type="entry name" value="P-loop containing nucleotide triphosphate hydrolases"/>
    <property type="match status" value="1"/>
</dbReference>
<dbReference type="HAMAP" id="MF_00376">
    <property type="entry name" value="Dephospho_CoA_kinase"/>
    <property type="match status" value="1"/>
</dbReference>
<dbReference type="InterPro" id="IPR001977">
    <property type="entry name" value="Depp_CoAkinase"/>
</dbReference>
<dbReference type="InterPro" id="IPR027417">
    <property type="entry name" value="P-loop_NTPase"/>
</dbReference>
<dbReference type="NCBIfam" id="TIGR00152">
    <property type="entry name" value="dephospho-CoA kinase"/>
    <property type="match status" value="1"/>
</dbReference>
<dbReference type="PANTHER" id="PTHR10695:SF46">
    <property type="entry name" value="BIFUNCTIONAL COENZYME A SYNTHASE-RELATED"/>
    <property type="match status" value="1"/>
</dbReference>
<dbReference type="PANTHER" id="PTHR10695">
    <property type="entry name" value="DEPHOSPHO-COA KINASE-RELATED"/>
    <property type="match status" value="1"/>
</dbReference>
<dbReference type="Pfam" id="PF01121">
    <property type="entry name" value="CoaE"/>
    <property type="match status" value="1"/>
</dbReference>
<dbReference type="SUPFAM" id="SSF52540">
    <property type="entry name" value="P-loop containing nucleoside triphosphate hydrolases"/>
    <property type="match status" value="1"/>
</dbReference>
<dbReference type="PROSITE" id="PS51219">
    <property type="entry name" value="DPCK"/>
    <property type="match status" value="1"/>
</dbReference>
<accession>Q8DSZ0</accession>
<comment type="function">
    <text evidence="1">Catalyzes the phosphorylation of the 3'-hydroxyl group of dephosphocoenzyme A to form coenzyme A.</text>
</comment>
<comment type="catalytic activity">
    <reaction evidence="1">
        <text>3'-dephospho-CoA + ATP = ADP + CoA + H(+)</text>
        <dbReference type="Rhea" id="RHEA:18245"/>
        <dbReference type="ChEBI" id="CHEBI:15378"/>
        <dbReference type="ChEBI" id="CHEBI:30616"/>
        <dbReference type="ChEBI" id="CHEBI:57287"/>
        <dbReference type="ChEBI" id="CHEBI:57328"/>
        <dbReference type="ChEBI" id="CHEBI:456216"/>
        <dbReference type="EC" id="2.7.1.24"/>
    </reaction>
</comment>
<comment type="pathway">
    <text evidence="1">Cofactor biosynthesis; coenzyme A biosynthesis; CoA from (R)-pantothenate: step 5/5.</text>
</comment>
<comment type="subcellular location">
    <subcellularLocation>
        <location evidence="1">Cytoplasm</location>
    </subcellularLocation>
</comment>
<comment type="similarity">
    <text evidence="1">Belongs to the CoaE family.</text>
</comment>
<feature type="chain" id="PRO_0000173011" description="Dephospho-CoA kinase">
    <location>
        <begin position="1"/>
        <end position="198"/>
    </location>
</feature>
<feature type="domain" description="DPCK" evidence="1">
    <location>
        <begin position="4"/>
        <end position="198"/>
    </location>
</feature>
<feature type="binding site" evidence="1">
    <location>
        <begin position="12"/>
        <end position="17"/>
    </location>
    <ligand>
        <name>ATP</name>
        <dbReference type="ChEBI" id="CHEBI:30616"/>
    </ligand>
</feature>
<proteinExistence type="inferred from homology"/>
<reference key="1">
    <citation type="journal article" date="2002" name="Proc. Natl. Acad. Sci. U.S.A.">
        <title>Genome sequence of Streptococcus mutans UA159, a cariogenic dental pathogen.</title>
        <authorList>
            <person name="Ajdic D.J."/>
            <person name="McShan W.M."/>
            <person name="McLaughlin R.E."/>
            <person name="Savic G."/>
            <person name="Chang J."/>
            <person name="Carson M.B."/>
            <person name="Primeaux C."/>
            <person name="Tian R."/>
            <person name="Kenton S."/>
            <person name="Jia H.G."/>
            <person name="Lin S.P."/>
            <person name="Qian Y."/>
            <person name="Li S."/>
            <person name="Zhu H."/>
            <person name="Najar F.Z."/>
            <person name="Lai H."/>
            <person name="White J."/>
            <person name="Roe B.A."/>
            <person name="Ferretti J.J."/>
        </authorList>
    </citation>
    <scope>NUCLEOTIDE SEQUENCE [LARGE SCALE GENOMIC DNA]</scope>
    <source>
        <strain>ATCC 700610 / UA159</strain>
    </source>
</reference>
<sequence length="198" mass="22634">MTKIIGITGGIASGKSTITNYLRQKGYQVIDADQVVHDLQANGGRLYQALVNWLGTAILNEAGELNRPKLSQLIFSSPDNLAKSSQLQNAIIRQELETRRDQLAKTEAIFFMDIPLLIEQNYRDWFDEIWLIAVSPETQIKRLKQRNGYSQEEAQQRLASQMPLQAKKVYADQIIDNNKTVENTKMQVDSQLRRLQNE</sequence>
<organism>
    <name type="scientific">Streptococcus mutans serotype c (strain ATCC 700610 / UA159)</name>
    <dbReference type="NCBI Taxonomy" id="210007"/>
    <lineage>
        <taxon>Bacteria</taxon>
        <taxon>Bacillati</taxon>
        <taxon>Bacillota</taxon>
        <taxon>Bacilli</taxon>
        <taxon>Lactobacillales</taxon>
        <taxon>Streptococcaceae</taxon>
        <taxon>Streptococcus</taxon>
    </lineage>
</organism>
<name>COAE_STRMU</name>
<protein>
    <recommendedName>
        <fullName evidence="1">Dephospho-CoA kinase</fullName>
        <ecNumber evidence="1">2.7.1.24</ecNumber>
    </recommendedName>
    <alternativeName>
        <fullName evidence="1">Dephosphocoenzyme A kinase</fullName>
    </alternativeName>
</protein>
<evidence type="ECO:0000255" key="1">
    <source>
        <dbReference type="HAMAP-Rule" id="MF_00376"/>
    </source>
</evidence>
<gene>
    <name evidence="1" type="primary">coaE</name>
    <name type="ordered locus">SMU_1613c</name>
</gene>
<keyword id="KW-0067">ATP-binding</keyword>
<keyword id="KW-0173">Coenzyme A biosynthesis</keyword>
<keyword id="KW-0963">Cytoplasm</keyword>
<keyword id="KW-0418">Kinase</keyword>
<keyword id="KW-0547">Nucleotide-binding</keyword>
<keyword id="KW-1185">Reference proteome</keyword>
<keyword id="KW-0808">Transferase</keyword>